<proteinExistence type="inferred from homology"/>
<accession>Q4QMI7</accession>
<sequence>MAAKIISGTELSKQIKANLADKITHYIEQGKRAPGLAVILVGADPASQIYVGNKRKSCEEVGILSKSYDLPETTTQNELLAIIDQLNADKNIDGILVQLPLPKQINAEAIIERIDPKKDVDGFHPYNVGRLCQRIPTLRACTPYGVMKLLETTGIDLHGKHAVIVGASNIVGRPMSLELLLAGATVTVTHRFTKNLENHVRQADILVVAVGKPNLISGDWIKESAVVIDVGINRVDGKLVGDVEFDKAAEKAAYITPVPGGVGPMTVAMLMSNTLYAYEHNK</sequence>
<protein>
    <recommendedName>
        <fullName evidence="1">Bifunctional protein FolD</fullName>
    </recommendedName>
    <domain>
        <recommendedName>
            <fullName evidence="1">Methylenetetrahydrofolate dehydrogenase</fullName>
            <ecNumber evidence="1">1.5.1.5</ecNumber>
        </recommendedName>
    </domain>
    <domain>
        <recommendedName>
            <fullName evidence="1">Methenyltetrahydrofolate cyclohydrolase</fullName>
            <ecNumber evidence="1">3.5.4.9</ecNumber>
        </recommendedName>
    </domain>
</protein>
<organism>
    <name type="scientific">Haemophilus influenzae (strain 86-028NP)</name>
    <dbReference type="NCBI Taxonomy" id="281310"/>
    <lineage>
        <taxon>Bacteria</taxon>
        <taxon>Pseudomonadati</taxon>
        <taxon>Pseudomonadota</taxon>
        <taxon>Gammaproteobacteria</taxon>
        <taxon>Pasteurellales</taxon>
        <taxon>Pasteurellaceae</taxon>
        <taxon>Haemophilus</taxon>
    </lineage>
</organism>
<evidence type="ECO:0000255" key="1">
    <source>
        <dbReference type="HAMAP-Rule" id="MF_01576"/>
    </source>
</evidence>
<name>FOLD_HAEI8</name>
<keyword id="KW-0028">Amino-acid biosynthesis</keyword>
<keyword id="KW-0368">Histidine biosynthesis</keyword>
<keyword id="KW-0378">Hydrolase</keyword>
<keyword id="KW-0486">Methionine biosynthesis</keyword>
<keyword id="KW-0511">Multifunctional enzyme</keyword>
<keyword id="KW-0521">NADP</keyword>
<keyword id="KW-0554">One-carbon metabolism</keyword>
<keyword id="KW-0560">Oxidoreductase</keyword>
<keyword id="KW-0658">Purine biosynthesis</keyword>
<gene>
    <name evidence="1" type="primary">folD</name>
    <name type="ordered locus">NTHI0864</name>
</gene>
<comment type="function">
    <text evidence="1">Catalyzes the oxidation of 5,10-methylenetetrahydrofolate to 5,10-methenyltetrahydrofolate and then the hydrolysis of 5,10-methenyltetrahydrofolate to 10-formyltetrahydrofolate.</text>
</comment>
<comment type="catalytic activity">
    <reaction evidence="1">
        <text>(6R)-5,10-methylene-5,6,7,8-tetrahydrofolate + NADP(+) = (6R)-5,10-methenyltetrahydrofolate + NADPH</text>
        <dbReference type="Rhea" id="RHEA:22812"/>
        <dbReference type="ChEBI" id="CHEBI:15636"/>
        <dbReference type="ChEBI" id="CHEBI:57455"/>
        <dbReference type="ChEBI" id="CHEBI:57783"/>
        <dbReference type="ChEBI" id="CHEBI:58349"/>
        <dbReference type="EC" id="1.5.1.5"/>
    </reaction>
</comment>
<comment type="catalytic activity">
    <reaction evidence="1">
        <text>(6R)-5,10-methenyltetrahydrofolate + H2O = (6R)-10-formyltetrahydrofolate + H(+)</text>
        <dbReference type="Rhea" id="RHEA:23700"/>
        <dbReference type="ChEBI" id="CHEBI:15377"/>
        <dbReference type="ChEBI" id="CHEBI:15378"/>
        <dbReference type="ChEBI" id="CHEBI:57455"/>
        <dbReference type="ChEBI" id="CHEBI:195366"/>
        <dbReference type="EC" id="3.5.4.9"/>
    </reaction>
</comment>
<comment type="pathway">
    <text evidence="1">One-carbon metabolism; tetrahydrofolate interconversion.</text>
</comment>
<comment type="subunit">
    <text evidence="1">Homodimer.</text>
</comment>
<comment type="similarity">
    <text evidence="1">Belongs to the tetrahydrofolate dehydrogenase/cyclohydrolase family.</text>
</comment>
<reference key="1">
    <citation type="journal article" date="2005" name="J. Bacteriol.">
        <title>Genomic sequence of an otitis media isolate of nontypeable Haemophilus influenzae: comparative study with H. influenzae serotype d, strain KW20.</title>
        <authorList>
            <person name="Harrison A."/>
            <person name="Dyer D.W."/>
            <person name="Gillaspy A."/>
            <person name="Ray W.C."/>
            <person name="Mungur R."/>
            <person name="Carson M.B."/>
            <person name="Zhong H."/>
            <person name="Gipson J."/>
            <person name="Gipson M."/>
            <person name="Johnson L.S."/>
            <person name="Lewis L."/>
            <person name="Bakaletz L.O."/>
            <person name="Munson R.S. Jr."/>
        </authorList>
    </citation>
    <scope>NUCLEOTIDE SEQUENCE [LARGE SCALE GENOMIC DNA]</scope>
    <source>
        <strain>86-028NP</strain>
    </source>
</reference>
<feature type="chain" id="PRO_0000268365" description="Bifunctional protein FolD">
    <location>
        <begin position="1"/>
        <end position="282"/>
    </location>
</feature>
<feature type="binding site" evidence="1">
    <location>
        <begin position="166"/>
        <end position="168"/>
    </location>
    <ligand>
        <name>NADP(+)</name>
        <dbReference type="ChEBI" id="CHEBI:58349"/>
    </ligand>
</feature>
<feature type="binding site" evidence="1">
    <location>
        <position position="232"/>
    </location>
    <ligand>
        <name>NADP(+)</name>
        <dbReference type="ChEBI" id="CHEBI:58349"/>
    </ligand>
</feature>
<dbReference type="EC" id="1.5.1.5" evidence="1"/>
<dbReference type="EC" id="3.5.4.9" evidence="1"/>
<dbReference type="EMBL" id="CP000057">
    <property type="protein sequence ID" value="AAX87760.1"/>
    <property type="molecule type" value="Genomic_DNA"/>
</dbReference>
<dbReference type="RefSeq" id="WP_005654480.1">
    <property type="nucleotide sequence ID" value="NC_007146.2"/>
</dbReference>
<dbReference type="SMR" id="Q4QMI7"/>
<dbReference type="GeneID" id="93219740"/>
<dbReference type="KEGG" id="hit:NTHI0864"/>
<dbReference type="HOGENOM" id="CLU_034045_2_1_6"/>
<dbReference type="UniPathway" id="UPA00193"/>
<dbReference type="Proteomes" id="UP000002525">
    <property type="component" value="Chromosome"/>
</dbReference>
<dbReference type="GO" id="GO:0005829">
    <property type="term" value="C:cytosol"/>
    <property type="evidence" value="ECO:0007669"/>
    <property type="project" value="TreeGrafter"/>
</dbReference>
<dbReference type="GO" id="GO:0004477">
    <property type="term" value="F:methenyltetrahydrofolate cyclohydrolase activity"/>
    <property type="evidence" value="ECO:0007669"/>
    <property type="project" value="UniProtKB-UniRule"/>
</dbReference>
<dbReference type="GO" id="GO:0004488">
    <property type="term" value="F:methylenetetrahydrofolate dehydrogenase (NADP+) activity"/>
    <property type="evidence" value="ECO:0007669"/>
    <property type="project" value="UniProtKB-UniRule"/>
</dbReference>
<dbReference type="GO" id="GO:0000105">
    <property type="term" value="P:L-histidine biosynthetic process"/>
    <property type="evidence" value="ECO:0007669"/>
    <property type="project" value="UniProtKB-KW"/>
</dbReference>
<dbReference type="GO" id="GO:0009086">
    <property type="term" value="P:methionine biosynthetic process"/>
    <property type="evidence" value="ECO:0007669"/>
    <property type="project" value="UniProtKB-KW"/>
</dbReference>
<dbReference type="GO" id="GO:0006164">
    <property type="term" value="P:purine nucleotide biosynthetic process"/>
    <property type="evidence" value="ECO:0007669"/>
    <property type="project" value="UniProtKB-KW"/>
</dbReference>
<dbReference type="GO" id="GO:0035999">
    <property type="term" value="P:tetrahydrofolate interconversion"/>
    <property type="evidence" value="ECO:0007669"/>
    <property type="project" value="UniProtKB-UniRule"/>
</dbReference>
<dbReference type="CDD" id="cd01080">
    <property type="entry name" value="NAD_bind_m-THF_DH_Cyclohyd"/>
    <property type="match status" value="1"/>
</dbReference>
<dbReference type="FunFam" id="3.40.50.10860:FF:000001">
    <property type="entry name" value="Bifunctional protein FolD"/>
    <property type="match status" value="1"/>
</dbReference>
<dbReference type="FunFam" id="3.40.50.720:FF:000006">
    <property type="entry name" value="Bifunctional protein FolD"/>
    <property type="match status" value="1"/>
</dbReference>
<dbReference type="Gene3D" id="3.40.50.10860">
    <property type="entry name" value="Leucine Dehydrogenase, chain A, domain 1"/>
    <property type="match status" value="1"/>
</dbReference>
<dbReference type="Gene3D" id="3.40.50.720">
    <property type="entry name" value="NAD(P)-binding Rossmann-like Domain"/>
    <property type="match status" value="1"/>
</dbReference>
<dbReference type="HAMAP" id="MF_01576">
    <property type="entry name" value="THF_DHG_CYH"/>
    <property type="match status" value="1"/>
</dbReference>
<dbReference type="InterPro" id="IPR046346">
    <property type="entry name" value="Aminoacid_DH-like_N_sf"/>
</dbReference>
<dbReference type="InterPro" id="IPR036291">
    <property type="entry name" value="NAD(P)-bd_dom_sf"/>
</dbReference>
<dbReference type="InterPro" id="IPR000672">
    <property type="entry name" value="THF_DH/CycHdrlase"/>
</dbReference>
<dbReference type="InterPro" id="IPR020630">
    <property type="entry name" value="THF_DH/CycHdrlase_cat_dom"/>
</dbReference>
<dbReference type="InterPro" id="IPR020867">
    <property type="entry name" value="THF_DH/CycHdrlase_CS"/>
</dbReference>
<dbReference type="InterPro" id="IPR020631">
    <property type="entry name" value="THF_DH/CycHdrlase_NAD-bd_dom"/>
</dbReference>
<dbReference type="NCBIfam" id="NF008058">
    <property type="entry name" value="PRK10792.1"/>
    <property type="match status" value="1"/>
</dbReference>
<dbReference type="NCBIfam" id="NF010783">
    <property type="entry name" value="PRK14186.1"/>
    <property type="match status" value="1"/>
</dbReference>
<dbReference type="PANTHER" id="PTHR48099:SF5">
    <property type="entry name" value="C-1-TETRAHYDROFOLATE SYNTHASE, CYTOPLASMIC"/>
    <property type="match status" value="1"/>
</dbReference>
<dbReference type="PANTHER" id="PTHR48099">
    <property type="entry name" value="C-1-TETRAHYDROFOLATE SYNTHASE, CYTOPLASMIC-RELATED"/>
    <property type="match status" value="1"/>
</dbReference>
<dbReference type="Pfam" id="PF00763">
    <property type="entry name" value="THF_DHG_CYH"/>
    <property type="match status" value="1"/>
</dbReference>
<dbReference type="Pfam" id="PF02882">
    <property type="entry name" value="THF_DHG_CYH_C"/>
    <property type="match status" value="1"/>
</dbReference>
<dbReference type="PRINTS" id="PR00085">
    <property type="entry name" value="THFDHDRGNASE"/>
</dbReference>
<dbReference type="SUPFAM" id="SSF53223">
    <property type="entry name" value="Aminoacid dehydrogenase-like, N-terminal domain"/>
    <property type="match status" value="1"/>
</dbReference>
<dbReference type="SUPFAM" id="SSF51735">
    <property type="entry name" value="NAD(P)-binding Rossmann-fold domains"/>
    <property type="match status" value="1"/>
</dbReference>
<dbReference type="PROSITE" id="PS00766">
    <property type="entry name" value="THF_DHG_CYH_1"/>
    <property type="match status" value="1"/>
</dbReference>
<dbReference type="PROSITE" id="PS00767">
    <property type="entry name" value="THF_DHG_CYH_2"/>
    <property type="match status" value="1"/>
</dbReference>